<proteinExistence type="evidence at protein level"/>
<accession>P20993</accession>
<keyword id="KW-0067">ATP-binding</keyword>
<keyword id="KW-1015">Disulfide bond</keyword>
<keyword id="KW-0238">DNA-binding</keyword>
<keyword id="KW-1168">Fusion of virus membrane with host membrane</keyword>
<keyword id="KW-0347">Helicase</keyword>
<keyword id="KW-0378">Hydrolase</keyword>
<keyword id="KW-0426">Late protein</keyword>
<keyword id="KW-0449">Lipoprotein</keyword>
<keyword id="KW-0472">Membrane</keyword>
<keyword id="KW-0519">Myristate</keyword>
<keyword id="KW-0547">Nucleotide-binding</keyword>
<keyword id="KW-0597">Phosphoprotein</keyword>
<keyword id="KW-1185">Reference proteome</keyword>
<keyword id="KW-0735">Signal-anchor</keyword>
<keyword id="KW-0804">Transcription</keyword>
<keyword id="KW-0805">Transcription regulation</keyword>
<keyword id="KW-0806">Transcription termination</keyword>
<keyword id="KW-0812">Transmembrane</keyword>
<keyword id="KW-1133">Transmembrane helix</keyword>
<keyword id="KW-0261">Viral envelope protein</keyword>
<keyword id="KW-1162">Viral penetration into host cytoplasm</keyword>
<keyword id="KW-0946">Virion</keyword>
<keyword id="KW-1160">Virus entry into host cell</keyword>
<sequence length="378" mass="43562">MGAAVTLNRIKIAPGIADIRDKYMELGFNYPEYNRAVKFAEESYTYYYETSPGEIKPKFCLIDGMSIDHCSSFIVPEFAKQYVLIHGEPCSSFKFRPGSLIYYQNEVTPEYIKDLKHATDYIASGQRCHFIKKDYLLGDSDSVAKCCSKTNTKHCPKIFNNNYKTEHCDDFMTGFCRNDPGNPNCLEWLRAKRKPAMSTYSDICSKHMDARYCSEFIRIIRPDYFTFGDTALYVFCNDHKGNRNCWCANYPKSNSGDKYLGPRVCWLHECTDESRDRKWLYYNQDVQRTRCKYVGCTINVNSLALKNSQAELTSNCTRTTSAVGDVHHPGEPVVKDKIKLPTWLGAAITLVVISVIFYFISIYSRPKIKTNDINVRRR</sequence>
<organism>
    <name type="scientific">Vaccinia virus (strain Copenhagen)</name>
    <name type="common">VACV</name>
    <dbReference type="NCBI Taxonomy" id="10249"/>
    <lineage>
        <taxon>Viruses</taxon>
        <taxon>Varidnaviria</taxon>
        <taxon>Bamfordvirae</taxon>
        <taxon>Nucleocytoviricota</taxon>
        <taxon>Pokkesviricetes</taxon>
        <taxon>Chitovirales</taxon>
        <taxon>Poxviridae</taxon>
        <taxon>Chordopoxvirinae</taxon>
        <taxon>Orthopoxvirus</taxon>
        <taxon>Vaccinia virus</taxon>
    </lineage>
</organism>
<dbReference type="EMBL" id="M35027">
    <property type="protein sequence ID" value="AAA48138.1"/>
    <property type="molecule type" value="Genomic_DNA"/>
</dbReference>
<dbReference type="PIR" id="I42518">
    <property type="entry name" value="I42518"/>
</dbReference>
<dbReference type="SMR" id="P20993"/>
<dbReference type="iPTMnet" id="P20993"/>
<dbReference type="Proteomes" id="UP000008269">
    <property type="component" value="Segment"/>
</dbReference>
<dbReference type="GO" id="GO:0016020">
    <property type="term" value="C:membrane"/>
    <property type="evidence" value="ECO:0007669"/>
    <property type="project" value="UniProtKB-KW"/>
</dbReference>
<dbReference type="GO" id="GO:0019031">
    <property type="term" value="C:viral envelope"/>
    <property type="evidence" value="ECO:0007669"/>
    <property type="project" value="UniProtKB-KW"/>
</dbReference>
<dbReference type="GO" id="GO:0055036">
    <property type="term" value="C:virion membrane"/>
    <property type="evidence" value="ECO:0007669"/>
    <property type="project" value="UniProtKB-SubCell"/>
</dbReference>
<dbReference type="GO" id="GO:0005524">
    <property type="term" value="F:ATP binding"/>
    <property type="evidence" value="ECO:0007669"/>
    <property type="project" value="UniProtKB-KW"/>
</dbReference>
<dbReference type="GO" id="GO:0003677">
    <property type="term" value="F:DNA binding"/>
    <property type="evidence" value="ECO:0007669"/>
    <property type="project" value="UniProtKB-KW"/>
</dbReference>
<dbReference type="GO" id="GO:0004386">
    <property type="term" value="F:helicase activity"/>
    <property type="evidence" value="ECO:0007669"/>
    <property type="project" value="UniProtKB-KW"/>
</dbReference>
<dbReference type="GO" id="GO:0016787">
    <property type="term" value="F:hydrolase activity"/>
    <property type="evidence" value="ECO:0007669"/>
    <property type="project" value="UniProtKB-KW"/>
</dbReference>
<dbReference type="GO" id="GO:0006353">
    <property type="term" value="P:DNA-templated transcription termination"/>
    <property type="evidence" value="ECO:0007669"/>
    <property type="project" value="UniProtKB-KW"/>
</dbReference>
<dbReference type="GO" id="GO:0039663">
    <property type="term" value="P:membrane fusion involved in viral entry into host cell"/>
    <property type="evidence" value="ECO:0007669"/>
    <property type="project" value="UniProtKB-KW"/>
</dbReference>
<dbReference type="GO" id="GO:0046718">
    <property type="term" value="P:symbiont entry into host cell"/>
    <property type="evidence" value="ECO:0007669"/>
    <property type="project" value="UniProtKB-KW"/>
</dbReference>
<dbReference type="InterPro" id="IPR004251">
    <property type="entry name" value="Pox_virus_G9/A16"/>
</dbReference>
<dbReference type="Pfam" id="PF03003">
    <property type="entry name" value="Pox_G9-A16"/>
    <property type="match status" value="1"/>
</dbReference>
<organismHost>
    <name type="scientific">Homo sapiens</name>
    <name type="common">Human</name>
    <dbReference type="NCBI Taxonomy" id="9606"/>
</organismHost>
<reference key="1">
    <citation type="journal article" date="1990" name="Virology">
        <title>The complete DNA sequence of vaccinia virus.</title>
        <authorList>
            <person name="Goebel S.J."/>
            <person name="Johnson G.P."/>
            <person name="Perkus M.E."/>
            <person name="Davis S.W."/>
            <person name="Winslow J.P."/>
            <person name="Paoletti E."/>
        </authorList>
    </citation>
    <scope>NUCLEOTIDE SEQUENCE [LARGE SCALE GENOMIC DNA]</scope>
</reference>
<reference key="2">
    <citation type="journal article" date="1990" name="Virology">
        <title>Appendix to 'The complete DNA sequence of vaccinia virus'.</title>
        <authorList>
            <person name="Goebel S.J."/>
            <person name="Johnson G.P."/>
            <person name="Perkus M.E."/>
            <person name="Davis S.W."/>
            <person name="Winslow J.P."/>
            <person name="Paoletti E."/>
        </authorList>
    </citation>
    <scope>NUCLEOTIDE SEQUENCE [LARGE SCALE GENOMIC DNA]</scope>
</reference>
<reference key="3">
    <citation type="journal article" date="1997" name="J. Virol.">
        <title>Identification and analysis of three myristylated vaccinia virus late proteins.</title>
        <authorList>
            <person name="Martin K.H."/>
            <person name="Grosenbach D.W."/>
            <person name="Franke C.A."/>
            <person name="Hruby D.E."/>
        </authorList>
    </citation>
    <scope>MYRISTOYLATION AT GLY-2</scope>
    <scope>SUBCELLULAR LOCATION</scope>
    <scope>MUTAGENESIS OF GLY-2</scope>
</reference>
<gene>
    <name type="primary">OPG143</name>
    <name type="ORF">A16L</name>
</gene>
<evidence type="ECO:0000250" key="1">
    <source>
        <dbReference type="UniProtKB" id="P16710"/>
    </source>
</evidence>
<evidence type="ECO:0000255" key="2"/>
<evidence type="ECO:0000269" key="3">
    <source>
    </source>
</evidence>
<evidence type="ECO:0000305" key="4"/>
<feature type="initiator methionine" description="Removed; by host">
    <location>
        <position position="1"/>
    </location>
</feature>
<feature type="chain" id="PRO_0000099251" description="Virion membrane protein OPG143">
    <location>
        <begin position="2"/>
        <end position="378"/>
    </location>
</feature>
<feature type="topological domain" description="Virion surface" evidence="2">
    <location>
        <begin position="2"/>
        <end position="342"/>
    </location>
</feature>
<feature type="transmembrane region" description="Helical; Signal-anchor for type II membrane protein" evidence="2">
    <location>
        <begin position="343"/>
        <end position="363"/>
    </location>
</feature>
<feature type="topological domain" description="Intravirion" evidence="2">
    <location>
        <begin position="364"/>
        <end position="378"/>
    </location>
</feature>
<feature type="lipid moiety-binding region" description="N-myristoyl glycine; by host" evidence="3">
    <location>
        <position position="2"/>
    </location>
</feature>
<feature type="mutagenesis site" description="Complete loss of myristoylation." evidence="3">
    <original>G</original>
    <variation>A</variation>
    <location>
        <position position="2"/>
    </location>
</feature>
<protein>
    <recommendedName>
        <fullName>Virion membrane protein OPG143</fullName>
    </recommendedName>
</protein>
<name>PG143_VACCC</name>
<comment type="function">
    <text evidence="1">Envelope protein part of the entry-fusion complex responsible for the virus membrane fusion with host cell membrane during virus entry. Also plays a role in cell-cell fusion (syncytium formation).</text>
</comment>
<comment type="subunit">
    <text evidence="1">Part of a stable entry-fusion complex (EFC) which is at least composed of proteins OPG143, OPG147, OPG155, OPG086, OPG094, OPG107, OPG104, and OPG099. Formation of the viral membrane is necessary for the assembly of the complex. Interacts with OPG094. Interacts with OPG153.</text>
</comment>
<comment type="subcellular location">
    <subcellularLocation>
        <location evidence="1">Virion membrane</location>
        <topology evidence="1">Single-pass type II membrane protein</topology>
    </subcellularLocation>
    <text evidence="1">Component of the mature virion (MV) membrane. The mature virion is located in the cytoplasm of infected cells and is probably released by cell lysis.</text>
</comment>
<comment type="induction">
    <text>Expressed in the late phase of the viral replicative cycle.</text>
</comment>
<comment type="PTM">
    <text evidence="1">Most cysteines are linked by disulfide bonds. They are created by the viral disulfide bond formation pathway, a poxvirus-specific redox pathway that operates on the cytoplasmic side of the MV membranes.</text>
</comment>
<comment type="similarity">
    <text evidence="4">Belongs to the orthopoxvirus OPG143 family.</text>
</comment>